<evidence type="ECO:0000255" key="1">
    <source>
        <dbReference type="HAMAP-Rule" id="MF_01365"/>
    </source>
</evidence>
<evidence type="ECO:0000305" key="2"/>
<comment type="function">
    <text evidence="1">This protein binds to the 23S rRNA, and is important in its secondary structure. It is located near the subunit interface in the base of the L7/L12 stalk, and near the tRNA binding site of the peptidyltransferase center.</text>
</comment>
<comment type="subunit">
    <text evidence="1">Part of the 50S ribosomal subunit.</text>
</comment>
<comment type="similarity">
    <text evidence="1">Belongs to the universal ribosomal protein uL6 family.</text>
</comment>
<gene>
    <name evidence="1" type="primary">rplF</name>
    <name type="ordered locus">Shew185_0211</name>
</gene>
<protein>
    <recommendedName>
        <fullName evidence="1">Large ribosomal subunit protein uL6</fullName>
    </recommendedName>
    <alternativeName>
        <fullName evidence="2">50S ribosomal protein L6</fullName>
    </alternativeName>
</protein>
<name>RL6_SHEB8</name>
<sequence>MSRVAKAPVSIPAGVEVTLNEQTLTVKGGKGSLTRVINNAVNVVIEAGVVKFLPVEGVSNAWAQAGTTRALVNNMVVGVSQGFERKLKLVGVGYRAKLVGSDIDLTLGFSHPLVHKLPAGVTAECPSQTDIVLRGVDKQLIGQVAAEIRGYRPPEPYKGKGVRYDDEVVRRKEAKKK</sequence>
<organism>
    <name type="scientific">Shewanella baltica (strain OS185)</name>
    <dbReference type="NCBI Taxonomy" id="402882"/>
    <lineage>
        <taxon>Bacteria</taxon>
        <taxon>Pseudomonadati</taxon>
        <taxon>Pseudomonadota</taxon>
        <taxon>Gammaproteobacteria</taxon>
        <taxon>Alteromonadales</taxon>
        <taxon>Shewanellaceae</taxon>
        <taxon>Shewanella</taxon>
    </lineage>
</organism>
<reference key="1">
    <citation type="submission" date="2007-07" db="EMBL/GenBank/DDBJ databases">
        <title>Complete sequence of chromosome of Shewanella baltica OS185.</title>
        <authorList>
            <consortium name="US DOE Joint Genome Institute"/>
            <person name="Copeland A."/>
            <person name="Lucas S."/>
            <person name="Lapidus A."/>
            <person name="Barry K."/>
            <person name="Glavina del Rio T."/>
            <person name="Dalin E."/>
            <person name="Tice H."/>
            <person name="Pitluck S."/>
            <person name="Sims D."/>
            <person name="Brettin T."/>
            <person name="Bruce D."/>
            <person name="Detter J.C."/>
            <person name="Han C."/>
            <person name="Schmutz J."/>
            <person name="Larimer F."/>
            <person name="Land M."/>
            <person name="Hauser L."/>
            <person name="Kyrpides N."/>
            <person name="Mikhailova N."/>
            <person name="Brettar I."/>
            <person name="Rodrigues J."/>
            <person name="Konstantinidis K."/>
            <person name="Tiedje J."/>
            <person name="Richardson P."/>
        </authorList>
    </citation>
    <scope>NUCLEOTIDE SEQUENCE [LARGE SCALE GENOMIC DNA]</scope>
    <source>
        <strain>OS185</strain>
    </source>
</reference>
<accession>A6WHU3</accession>
<feature type="chain" id="PRO_1000055304" description="Large ribosomal subunit protein uL6">
    <location>
        <begin position="1"/>
        <end position="177"/>
    </location>
</feature>
<dbReference type="EMBL" id="CP000753">
    <property type="protein sequence ID" value="ABS06382.1"/>
    <property type="molecule type" value="Genomic_DNA"/>
</dbReference>
<dbReference type="RefSeq" id="WP_006083585.1">
    <property type="nucleotide sequence ID" value="NC_009665.1"/>
</dbReference>
<dbReference type="SMR" id="A6WHU3"/>
<dbReference type="GeneID" id="11774510"/>
<dbReference type="KEGG" id="sbm:Shew185_0211"/>
<dbReference type="HOGENOM" id="CLU_065464_1_2_6"/>
<dbReference type="GO" id="GO:0022625">
    <property type="term" value="C:cytosolic large ribosomal subunit"/>
    <property type="evidence" value="ECO:0007669"/>
    <property type="project" value="TreeGrafter"/>
</dbReference>
<dbReference type="GO" id="GO:0019843">
    <property type="term" value="F:rRNA binding"/>
    <property type="evidence" value="ECO:0007669"/>
    <property type="project" value="UniProtKB-UniRule"/>
</dbReference>
<dbReference type="GO" id="GO:0003735">
    <property type="term" value="F:structural constituent of ribosome"/>
    <property type="evidence" value="ECO:0007669"/>
    <property type="project" value="InterPro"/>
</dbReference>
<dbReference type="GO" id="GO:0002181">
    <property type="term" value="P:cytoplasmic translation"/>
    <property type="evidence" value="ECO:0007669"/>
    <property type="project" value="TreeGrafter"/>
</dbReference>
<dbReference type="FunFam" id="3.90.930.12:FF:000001">
    <property type="entry name" value="50S ribosomal protein L6"/>
    <property type="match status" value="1"/>
</dbReference>
<dbReference type="FunFam" id="3.90.930.12:FF:000002">
    <property type="entry name" value="50S ribosomal protein L6"/>
    <property type="match status" value="1"/>
</dbReference>
<dbReference type="Gene3D" id="3.90.930.12">
    <property type="entry name" value="Ribosomal protein L6, alpha-beta domain"/>
    <property type="match status" value="2"/>
</dbReference>
<dbReference type="HAMAP" id="MF_01365_B">
    <property type="entry name" value="Ribosomal_uL6_B"/>
    <property type="match status" value="1"/>
</dbReference>
<dbReference type="InterPro" id="IPR000702">
    <property type="entry name" value="Ribosomal_uL6-like"/>
</dbReference>
<dbReference type="InterPro" id="IPR036789">
    <property type="entry name" value="Ribosomal_uL6-like_a/b-dom_sf"/>
</dbReference>
<dbReference type="InterPro" id="IPR020040">
    <property type="entry name" value="Ribosomal_uL6_a/b-dom"/>
</dbReference>
<dbReference type="InterPro" id="IPR019906">
    <property type="entry name" value="Ribosomal_uL6_bac-type"/>
</dbReference>
<dbReference type="InterPro" id="IPR002358">
    <property type="entry name" value="Ribosomal_uL6_CS"/>
</dbReference>
<dbReference type="NCBIfam" id="TIGR03654">
    <property type="entry name" value="L6_bact"/>
    <property type="match status" value="1"/>
</dbReference>
<dbReference type="PANTHER" id="PTHR11655">
    <property type="entry name" value="60S/50S RIBOSOMAL PROTEIN L6/L9"/>
    <property type="match status" value="1"/>
</dbReference>
<dbReference type="PANTHER" id="PTHR11655:SF14">
    <property type="entry name" value="LARGE RIBOSOMAL SUBUNIT PROTEIN UL6M"/>
    <property type="match status" value="1"/>
</dbReference>
<dbReference type="Pfam" id="PF00347">
    <property type="entry name" value="Ribosomal_L6"/>
    <property type="match status" value="2"/>
</dbReference>
<dbReference type="PIRSF" id="PIRSF002162">
    <property type="entry name" value="Ribosomal_L6"/>
    <property type="match status" value="1"/>
</dbReference>
<dbReference type="PRINTS" id="PR00059">
    <property type="entry name" value="RIBOSOMALL6"/>
</dbReference>
<dbReference type="SUPFAM" id="SSF56053">
    <property type="entry name" value="Ribosomal protein L6"/>
    <property type="match status" value="2"/>
</dbReference>
<dbReference type="PROSITE" id="PS00525">
    <property type="entry name" value="RIBOSOMAL_L6_1"/>
    <property type="match status" value="1"/>
</dbReference>
<keyword id="KW-0687">Ribonucleoprotein</keyword>
<keyword id="KW-0689">Ribosomal protein</keyword>
<keyword id="KW-0694">RNA-binding</keyword>
<keyword id="KW-0699">rRNA-binding</keyword>
<proteinExistence type="inferred from homology"/>